<evidence type="ECO:0000255" key="1">
    <source>
        <dbReference type="HAMAP-Rule" id="MF_00226"/>
    </source>
</evidence>
<comment type="similarity">
    <text evidence="1">Belongs to the CinA family.</text>
</comment>
<proteinExistence type="inferred from homology"/>
<dbReference type="EMBL" id="CP001581">
    <property type="protein sequence ID" value="ACO84348.1"/>
    <property type="molecule type" value="Genomic_DNA"/>
</dbReference>
<dbReference type="RefSeq" id="WP_012704176.1">
    <property type="nucleotide sequence ID" value="NC_012563.1"/>
</dbReference>
<dbReference type="SMR" id="C1FQU7"/>
<dbReference type="KEGG" id="cby:CLM_0261"/>
<dbReference type="eggNOG" id="COG1058">
    <property type="taxonomic scope" value="Bacteria"/>
</dbReference>
<dbReference type="eggNOG" id="COG1546">
    <property type="taxonomic scope" value="Bacteria"/>
</dbReference>
<dbReference type="HOGENOM" id="CLU_030805_9_3_9"/>
<dbReference type="Proteomes" id="UP000001374">
    <property type="component" value="Chromosome"/>
</dbReference>
<dbReference type="CDD" id="cd00885">
    <property type="entry name" value="cinA"/>
    <property type="match status" value="1"/>
</dbReference>
<dbReference type="Gene3D" id="3.30.70.2860">
    <property type="match status" value="1"/>
</dbReference>
<dbReference type="Gene3D" id="3.90.950.20">
    <property type="entry name" value="CinA-like"/>
    <property type="match status" value="1"/>
</dbReference>
<dbReference type="Gene3D" id="3.40.980.10">
    <property type="entry name" value="MoaB/Mog-like domain"/>
    <property type="match status" value="1"/>
</dbReference>
<dbReference type="HAMAP" id="MF_00226_B">
    <property type="entry name" value="CinA_B"/>
    <property type="match status" value="1"/>
</dbReference>
<dbReference type="InterPro" id="IPR050101">
    <property type="entry name" value="CinA"/>
</dbReference>
<dbReference type="InterPro" id="IPR036653">
    <property type="entry name" value="CinA-like_C"/>
</dbReference>
<dbReference type="InterPro" id="IPR008136">
    <property type="entry name" value="CinA_C"/>
</dbReference>
<dbReference type="InterPro" id="IPR041424">
    <property type="entry name" value="CinA_KH"/>
</dbReference>
<dbReference type="InterPro" id="IPR008135">
    <property type="entry name" value="Competence-induced_CinA"/>
</dbReference>
<dbReference type="InterPro" id="IPR036425">
    <property type="entry name" value="MoaB/Mog-like_dom_sf"/>
</dbReference>
<dbReference type="InterPro" id="IPR001453">
    <property type="entry name" value="MoaB/Mog_dom"/>
</dbReference>
<dbReference type="NCBIfam" id="TIGR00200">
    <property type="entry name" value="cinA_nterm"/>
    <property type="match status" value="1"/>
</dbReference>
<dbReference type="NCBIfam" id="TIGR00177">
    <property type="entry name" value="molyb_syn"/>
    <property type="match status" value="1"/>
</dbReference>
<dbReference type="NCBIfam" id="TIGR00199">
    <property type="entry name" value="PncC_domain"/>
    <property type="match status" value="1"/>
</dbReference>
<dbReference type="NCBIfam" id="NF001813">
    <property type="entry name" value="PRK00549.1"/>
    <property type="match status" value="1"/>
</dbReference>
<dbReference type="PANTHER" id="PTHR13939">
    <property type="entry name" value="NICOTINAMIDE-NUCLEOTIDE AMIDOHYDROLASE PNCC"/>
    <property type="match status" value="1"/>
</dbReference>
<dbReference type="PANTHER" id="PTHR13939:SF0">
    <property type="entry name" value="NMN AMIDOHYDROLASE-LIKE PROTEIN YFAY"/>
    <property type="match status" value="1"/>
</dbReference>
<dbReference type="Pfam" id="PF02464">
    <property type="entry name" value="CinA"/>
    <property type="match status" value="1"/>
</dbReference>
<dbReference type="Pfam" id="PF18146">
    <property type="entry name" value="CinA_KH"/>
    <property type="match status" value="1"/>
</dbReference>
<dbReference type="Pfam" id="PF00994">
    <property type="entry name" value="MoCF_biosynth"/>
    <property type="match status" value="1"/>
</dbReference>
<dbReference type="PIRSF" id="PIRSF006728">
    <property type="entry name" value="CinA"/>
    <property type="match status" value="1"/>
</dbReference>
<dbReference type="SMART" id="SM00852">
    <property type="entry name" value="MoCF_biosynth"/>
    <property type="match status" value="1"/>
</dbReference>
<dbReference type="SUPFAM" id="SSF142433">
    <property type="entry name" value="CinA-like"/>
    <property type="match status" value="1"/>
</dbReference>
<dbReference type="SUPFAM" id="SSF53218">
    <property type="entry name" value="Molybdenum cofactor biosynthesis proteins"/>
    <property type="match status" value="1"/>
</dbReference>
<name>CINA_CLOBJ</name>
<sequence>MKAEILCVGTELLLGDIVNTNAQYISKELANIGIEVYHHSVIGDNENRLLKELERAFNYCDLVITTGGLGPTKDDLTKESVAKFFQEDLVLHEKSLKQIEKRLLCFNKSMTESNRKQAYFPKNCEILENPNGTAPGFIIEKDNKIAIILPGPPYEMQPMFENKVIPYLEKLTNSTIKSKVLRITGIGESDVADLISDILERQTNPTVAPYAKQGETTLRITAKANSEEKAISLIVPIEKKIRQILGDNIYSSGETLLEEVVANILVKRNLTIATAESCTGGLLAGKLINFPGISSVFLEGAITYSNESKINRLNVKKETLEKYTAVSKEVALEMAEGIAKSAGTNIGISTTGVAGPGGGTYDKPIGLIYIGLYINGKTFVKELNYSGNRQFIRNITVTRALDFLRRNLK</sequence>
<reference key="1">
    <citation type="submission" date="2008-10" db="EMBL/GenBank/DDBJ databases">
        <title>Genome sequence of Clostridium botulinum A2 Kyoto.</title>
        <authorList>
            <person name="Shrivastava S."/>
            <person name="Brinkac L.M."/>
            <person name="Brown J.L."/>
            <person name="Bruce D."/>
            <person name="Detter C.C."/>
            <person name="Johnson E.A."/>
            <person name="Munk C.A."/>
            <person name="Smith L.A."/>
            <person name="Smith T.J."/>
            <person name="Sutton G."/>
            <person name="Brettin T.S."/>
        </authorList>
    </citation>
    <scope>NUCLEOTIDE SEQUENCE [LARGE SCALE GENOMIC DNA]</scope>
    <source>
        <strain>Kyoto / Type A2</strain>
    </source>
</reference>
<protein>
    <recommendedName>
        <fullName evidence="1">Putative competence-damage inducible protein</fullName>
    </recommendedName>
</protein>
<gene>
    <name evidence="1" type="primary">cinA</name>
    <name type="ordered locus">CLM_0261</name>
</gene>
<organism>
    <name type="scientific">Clostridium botulinum (strain Kyoto / Type A2)</name>
    <dbReference type="NCBI Taxonomy" id="536232"/>
    <lineage>
        <taxon>Bacteria</taxon>
        <taxon>Bacillati</taxon>
        <taxon>Bacillota</taxon>
        <taxon>Clostridia</taxon>
        <taxon>Eubacteriales</taxon>
        <taxon>Clostridiaceae</taxon>
        <taxon>Clostridium</taxon>
    </lineage>
</organism>
<accession>C1FQU7</accession>
<feature type="chain" id="PRO_1000124978" description="Putative competence-damage inducible protein">
    <location>
        <begin position="1"/>
        <end position="409"/>
    </location>
</feature>